<keyword id="KW-0903">Direct protein sequencing</keyword>
<keyword id="KW-0227">DNA damage</keyword>
<keyword id="KW-0234">DNA repair</keyword>
<keyword id="KW-0235">DNA replication</keyword>
<keyword id="KW-0255">Endonuclease</keyword>
<keyword id="KW-0269">Exonuclease</keyword>
<keyword id="KW-0378">Hydrolase</keyword>
<keyword id="KW-0460">Magnesium</keyword>
<keyword id="KW-0479">Metal-binding</keyword>
<keyword id="KW-0496">Mitochondrion</keyword>
<keyword id="KW-0540">Nuclease</keyword>
<keyword id="KW-0539">Nucleus</keyword>
<keyword id="KW-0597">Phosphoprotein</keyword>
<keyword id="KW-1185">Reference proteome</keyword>
<sequence length="382" mass="43279">MGIKGLNAIISEHVPSAIRKSDIKSFFGRKVAIDASMSLYQFLIAVRQQDGGQLTNEAGETTSHLMGMFYRTLRMIDNGIKPCYVFDGKPPDLKSHELTKRSSRRVETEKKLAEATTELEKMKQERRLVKVSKEHNEEAQKLLGLMGIPYIIAPTEAEAQCAELAKKGKVYAAASEDMDTLCYRTPFLLRHLTFSEAKKEPIHEIDTELVLRGLDLTIEQFVDLCIMLGCDYCESIRGVGPVTALKLIKTHGSIEKIVEFIESGESNNTKWKIPEDWPYKQARMLFLDPEVIDGNEINLKWSPPKEKELIEYLCDDKKFSEERVKSGISRLKKGLKSGIQGRLDGFFQVVPKTKEQLAAAAKRAQENKKLNKNKNKVTKGRR</sequence>
<evidence type="ECO:0000255" key="1">
    <source>
        <dbReference type="HAMAP-Rule" id="MF_03140"/>
    </source>
</evidence>
<evidence type="ECO:0000256" key="2">
    <source>
        <dbReference type="SAM" id="MobiDB-lite"/>
    </source>
</evidence>
<evidence type="ECO:0000269" key="3">
    <source>
    </source>
</evidence>
<evidence type="ECO:0000269" key="4">
    <source>
    </source>
</evidence>
<evidence type="ECO:0000269" key="5">
    <source>
    </source>
</evidence>
<evidence type="ECO:0000269" key="6">
    <source>
    </source>
</evidence>
<evidence type="ECO:0000269" key="7">
    <source>
    </source>
</evidence>
<evidence type="ECO:0000269" key="8">
    <source>
    </source>
</evidence>
<evidence type="ECO:0000269" key="9">
    <source>
    </source>
</evidence>
<evidence type="ECO:0000269" key="10">
    <source>
    </source>
</evidence>
<evidence type="ECO:0000269" key="11">
    <source>
    </source>
</evidence>
<evidence type="ECO:0000269" key="12">
    <source>
    </source>
</evidence>
<feature type="chain" id="PRO_0000154038" description="Flap endonuclease 1">
    <location>
        <begin position="1"/>
        <end position="382"/>
    </location>
</feature>
<feature type="region of interest" description="N-domain">
    <location>
        <begin position="1"/>
        <end position="105"/>
    </location>
</feature>
<feature type="region of interest" description="I-domain">
    <location>
        <begin position="120"/>
        <end position="251"/>
    </location>
</feature>
<feature type="region of interest" description="Interaction with PCNA" evidence="1">
    <location>
        <begin position="339"/>
        <end position="347"/>
    </location>
</feature>
<feature type="region of interest" description="Disordered" evidence="2">
    <location>
        <begin position="358"/>
        <end position="382"/>
    </location>
</feature>
<feature type="compositionally biased region" description="Basic residues" evidence="2">
    <location>
        <begin position="370"/>
        <end position="382"/>
    </location>
</feature>
<feature type="binding site" evidence="1">
    <location>
        <position position="34"/>
    </location>
    <ligand>
        <name>Mg(2+)</name>
        <dbReference type="ChEBI" id="CHEBI:18420"/>
        <label>1</label>
    </ligand>
</feature>
<feature type="binding site" evidence="1">
    <location>
        <position position="47"/>
    </location>
    <ligand>
        <name>DNA</name>
        <dbReference type="ChEBI" id="CHEBI:16991"/>
    </ligand>
</feature>
<feature type="binding site" evidence="1">
    <location>
        <position position="71"/>
    </location>
    <ligand>
        <name>DNA</name>
        <dbReference type="ChEBI" id="CHEBI:16991"/>
    </ligand>
</feature>
<feature type="binding site" evidence="1">
    <location>
        <position position="87"/>
    </location>
    <ligand>
        <name>Mg(2+)</name>
        <dbReference type="ChEBI" id="CHEBI:18420"/>
        <label>1</label>
    </ligand>
</feature>
<feature type="binding site" evidence="1">
    <location>
        <position position="156"/>
    </location>
    <ligand>
        <name>DNA</name>
        <dbReference type="ChEBI" id="CHEBI:16991"/>
    </ligand>
</feature>
<feature type="binding site" evidence="1">
    <location>
        <position position="156"/>
    </location>
    <ligand>
        <name>Mg(2+)</name>
        <dbReference type="ChEBI" id="CHEBI:18420"/>
        <label>1</label>
    </ligand>
</feature>
<feature type="binding site" evidence="1">
    <location>
        <position position="158"/>
    </location>
    <ligand>
        <name>Mg(2+)</name>
        <dbReference type="ChEBI" id="CHEBI:18420"/>
        <label>1</label>
    </ligand>
</feature>
<feature type="binding site" evidence="1">
    <location>
        <position position="177"/>
    </location>
    <ligand>
        <name>Mg(2+)</name>
        <dbReference type="ChEBI" id="CHEBI:18420"/>
        <label>2</label>
    </ligand>
</feature>
<feature type="binding site" evidence="1">
    <location>
        <position position="179"/>
    </location>
    <ligand>
        <name>Mg(2+)</name>
        <dbReference type="ChEBI" id="CHEBI:18420"/>
        <label>2</label>
    </ligand>
</feature>
<feature type="binding site" evidence="1">
    <location>
        <position position="229"/>
    </location>
    <ligand>
        <name>DNA</name>
        <dbReference type="ChEBI" id="CHEBI:16991"/>
    </ligand>
</feature>
<feature type="binding site" evidence="1">
    <location>
        <position position="231"/>
    </location>
    <ligand>
        <name>DNA</name>
        <dbReference type="ChEBI" id="CHEBI:16991"/>
    </ligand>
</feature>
<feature type="binding site" evidence="1">
    <location>
        <position position="231"/>
    </location>
    <ligand>
        <name>Mg(2+)</name>
        <dbReference type="ChEBI" id="CHEBI:18420"/>
        <label>2</label>
    </ligand>
</feature>
<feature type="mutagenesis site" description="Deficient in double and single flap endonuclease cleavage and exonucleolytic cleavage." evidence="7">
    <original>G</original>
    <variation>S</variation>
    <location>
        <position position="67"/>
    </location>
</feature>
<feature type="mutagenesis site" description="Deficient in exonuclease and gap endonuclease activities, but retains almost all of its flap endonuclease activity." evidence="8">
    <original>E</original>
    <variation>A</variation>
    <location>
        <position position="176"/>
    </location>
</feature>
<feature type="mutagenesis site" description="Can only cleave double-flap structures with a 3' 1-nucleotide tail. Has no exonuclease activity." evidence="4">
    <original>G</original>
    <variation>D</variation>
    <location>
        <position position="240"/>
    </location>
</feature>
<feature type="mutagenesis site" description="Reduces interaction with POL30 more than 100 fold." evidence="3">
    <original>FF</original>
    <variation>GA</variation>
    <location>
        <begin position="346"/>
        <end position="347"/>
    </location>
</feature>
<gene>
    <name evidence="1" type="primary">RAD27</name>
    <name evidence="1" type="synonym">FEN1</name>
    <name type="synonym">RTH1</name>
    <name type="ordered locus">YKL113C</name>
    <name type="ORF">YKL510</name>
</gene>
<accession>P26793</accession>
<accession>D6VXH5</accession>
<comment type="function">
    <text evidence="1 4 5 7 8 9 10 11 12">Structure-specific nuclease with 5'-flap endonuclease and 5'-3' exonuclease activities involved in DNA replication and repair. During DNA replication, cleaves the 5'-overhanging flap structure that is generated by displacement synthesis when DNA polymerase encounters the 5'-end of a downstream Okazaki fragment. It enters the flap from the 5'-end and then tracks to cleave the flap base, leaving a nick for ligation. Also involved in the long patch base excision repair (LP-BER) pathway, by cleaving within the apurinic/apyrimidinic (AP) site-terminated flap. Acts as a genome stabilization factor that prevents flaps from equilibrating into structures that lead to duplications and deletions. Also possesses 5'-3' exonuclease activity on nicked or gapped double-stranded DNA, and exhibits RNase H activity. Also involved in replication and repair of rDNA and in repairing mitochondrial DNA.</text>
</comment>
<comment type="cofactor">
    <cofactor evidence="1">
        <name>Mg(2+)</name>
        <dbReference type="ChEBI" id="CHEBI:18420"/>
    </cofactor>
    <text evidence="1">Binds 2 magnesium ions per subunit. They probably participate in the reaction catalyzed by the enzyme. May bind an additional third magnesium ion after substrate binding.</text>
</comment>
<comment type="subunit">
    <text evidence="3">Interacts with PCNA (POL30). Three molecules of RAD27 bind to one PCNA trimer with each molecule binding to one PCNA monomer. PCNA stimulates the nuclease activity without altering cleavage specificity.</text>
</comment>
<comment type="interaction">
    <interactant intactId="EBI-14693">
        <id>P26793</id>
    </interactant>
    <interactant intactId="EBI-5973">
        <id>P38859</id>
        <label>DNA2</label>
    </interactant>
    <organismsDiffer>false</organismsDiffer>
    <experiments>3</experiments>
</comment>
<comment type="interaction">
    <interactant intactId="EBI-14693">
        <id>P26793</id>
    </interactant>
    <interactant intactId="EBI-12993">
        <id>P15873</id>
        <label>POL30</label>
    </interactant>
    <organismsDiffer>false</organismsDiffer>
    <experiments>7</experiments>
</comment>
<comment type="subcellular location">
    <subcellularLocation>
        <location>Nucleus</location>
        <location>Nucleolus</location>
    </subcellularLocation>
    <subcellularLocation>
        <location>Nucleus</location>
        <location>Nucleoplasm</location>
    </subcellularLocation>
    <subcellularLocation>
        <location>Mitochondrion</location>
    </subcellularLocation>
    <text>Resides mostly in the nucleoli and relocalizes to the nucleoplasm upon DNA damage.</text>
</comment>
<comment type="PTM">
    <text evidence="1">Phosphorylated. Phosphorylation upon DNA damage induces relocalization to the nuclear plasma.</text>
</comment>
<comment type="miscellaneous">
    <text evidence="6">Present with 6120 molecules/cell in log phase SD medium.</text>
</comment>
<comment type="similarity">
    <text evidence="1">Belongs to the XPG/RAD2 endonuclease family. FEN1 subfamily.</text>
</comment>
<name>FEN1_YEAST</name>
<proteinExistence type="evidence at protein level"/>
<protein>
    <recommendedName>
        <fullName evidence="1">Flap endonuclease 1</fullName>
        <shortName evidence="1">FEN-1</shortName>
        <ecNumber evidence="1">3.1.-.-</ecNumber>
    </recommendedName>
    <alternativeName>
        <fullName evidence="1">Flap structure-specific endonuclease 1</fullName>
    </alternativeName>
    <alternativeName>
        <fullName>RAD2 homolog nuclease 1</fullName>
        <shortName>RTH1 nuclease</shortName>
    </alternativeName>
    <alternativeName>
        <fullName>Structure-specific endonuclease RAD27</fullName>
    </alternativeName>
</protein>
<organism>
    <name type="scientific">Saccharomyces cerevisiae (strain ATCC 204508 / S288c)</name>
    <name type="common">Baker's yeast</name>
    <dbReference type="NCBI Taxonomy" id="559292"/>
    <lineage>
        <taxon>Eukaryota</taxon>
        <taxon>Fungi</taxon>
        <taxon>Dikarya</taxon>
        <taxon>Ascomycota</taxon>
        <taxon>Saccharomycotina</taxon>
        <taxon>Saccharomycetes</taxon>
        <taxon>Saccharomycetales</taxon>
        <taxon>Saccharomycetaceae</taxon>
        <taxon>Saccharomyces</taxon>
    </lineage>
</organism>
<dbReference type="EC" id="3.1.-.-" evidence="1"/>
<dbReference type="EMBL" id="S93804">
    <property type="protein sequence ID" value="AAB21998.1"/>
    <property type="molecule type" value="Genomic_DNA"/>
</dbReference>
<dbReference type="EMBL" id="Z28113">
    <property type="protein sequence ID" value="CAA81953.1"/>
    <property type="molecule type" value="Genomic_DNA"/>
</dbReference>
<dbReference type="EMBL" id="BK006944">
    <property type="protein sequence ID" value="DAA09045.1"/>
    <property type="molecule type" value="Genomic_DNA"/>
</dbReference>
<dbReference type="PIR" id="S22267">
    <property type="entry name" value="S22267"/>
</dbReference>
<dbReference type="RefSeq" id="NP_012809.1">
    <property type="nucleotide sequence ID" value="NM_001179679.1"/>
</dbReference>
<dbReference type="SMR" id="P26793"/>
<dbReference type="BioGRID" id="34021">
    <property type="interactions" value="634"/>
</dbReference>
<dbReference type="DIP" id="DIP-2325N"/>
<dbReference type="ELM" id="P26793"/>
<dbReference type="FunCoup" id="P26793">
    <property type="interactions" value="1267"/>
</dbReference>
<dbReference type="IntAct" id="P26793">
    <property type="interactions" value="3"/>
</dbReference>
<dbReference type="MINT" id="P26793"/>
<dbReference type="STRING" id="4932.YKL113C"/>
<dbReference type="iPTMnet" id="P26793"/>
<dbReference type="PaxDb" id="4932-YKL113C"/>
<dbReference type="PeptideAtlas" id="P26793"/>
<dbReference type="EnsemblFungi" id="YKL113C_mRNA">
    <property type="protein sequence ID" value="YKL113C"/>
    <property type="gene ID" value="YKL113C"/>
</dbReference>
<dbReference type="GeneID" id="853747"/>
<dbReference type="KEGG" id="sce:YKL113C"/>
<dbReference type="AGR" id="SGD:S000001596"/>
<dbReference type="SGD" id="S000001596">
    <property type="gene designation" value="RAD27"/>
</dbReference>
<dbReference type="VEuPathDB" id="FungiDB:YKL113C"/>
<dbReference type="eggNOG" id="KOG2519">
    <property type="taxonomic scope" value="Eukaryota"/>
</dbReference>
<dbReference type="GeneTree" id="ENSGT00940000155807"/>
<dbReference type="HOGENOM" id="CLU_032444_2_0_1"/>
<dbReference type="InParanoid" id="P26793"/>
<dbReference type="OMA" id="MGIPWVQ"/>
<dbReference type="OrthoDB" id="1937206at2759"/>
<dbReference type="BioCyc" id="YEAST:G3O-31898-MONOMER"/>
<dbReference type="Reactome" id="R-SCE-69166">
    <property type="pathway name" value="Removal of the Flap Intermediate"/>
</dbReference>
<dbReference type="BioGRID-ORCS" id="853747">
    <property type="hits" value="2 hits in 10 CRISPR screens"/>
</dbReference>
<dbReference type="PRO" id="PR:P26793"/>
<dbReference type="Proteomes" id="UP000002311">
    <property type="component" value="Chromosome XI"/>
</dbReference>
<dbReference type="RNAct" id="P26793">
    <property type="molecule type" value="protein"/>
</dbReference>
<dbReference type="GO" id="GO:0005737">
    <property type="term" value="C:cytoplasm"/>
    <property type="evidence" value="ECO:0000318"/>
    <property type="project" value="GO_Central"/>
</dbReference>
<dbReference type="GO" id="GO:0005829">
    <property type="term" value="C:cytosol"/>
    <property type="evidence" value="ECO:0000314"/>
    <property type="project" value="SGD"/>
</dbReference>
<dbReference type="GO" id="GO:0005739">
    <property type="term" value="C:mitochondrion"/>
    <property type="evidence" value="ECO:0000314"/>
    <property type="project" value="SGD"/>
</dbReference>
<dbReference type="GO" id="GO:0005730">
    <property type="term" value="C:nucleolus"/>
    <property type="evidence" value="ECO:0007669"/>
    <property type="project" value="UniProtKB-SubCell"/>
</dbReference>
<dbReference type="GO" id="GO:0005654">
    <property type="term" value="C:nucleoplasm"/>
    <property type="evidence" value="ECO:0007669"/>
    <property type="project" value="UniProtKB-SubCell"/>
</dbReference>
<dbReference type="GO" id="GO:0005634">
    <property type="term" value="C:nucleus"/>
    <property type="evidence" value="ECO:0000314"/>
    <property type="project" value="SGD"/>
</dbReference>
<dbReference type="GO" id="GO:0008409">
    <property type="term" value="F:5'-3' exonuclease activity"/>
    <property type="evidence" value="ECO:0000314"/>
    <property type="project" value="SGD"/>
</dbReference>
<dbReference type="GO" id="GO:0017108">
    <property type="term" value="F:5'-flap endonuclease activity"/>
    <property type="evidence" value="ECO:0000314"/>
    <property type="project" value="SGD"/>
</dbReference>
<dbReference type="GO" id="GO:0003677">
    <property type="term" value="F:DNA binding"/>
    <property type="evidence" value="ECO:0007669"/>
    <property type="project" value="UniProtKB-UniRule"/>
</dbReference>
<dbReference type="GO" id="GO:0000287">
    <property type="term" value="F:magnesium ion binding"/>
    <property type="evidence" value="ECO:0007669"/>
    <property type="project" value="UniProtKB-UniRule"/>
</dbReference>
<dbReference type="GO" id="GO:0006284">
    <property type="term" value="P:base-excision repair"/>
    <property type="evidence" value="ECO:0007669"/>
    <property type="project" value="UniProtKB-UniRule"/>
</dbReference>
<dbReference type="GO" id="GO:0043137">
    <property type="term" value="P:DNA replication, removal of RNA primer"/>
    <property type="evidence" value="ECO:0000314"/>
    <property type="project" value="SGD"/>
</dbReference>
<dbReference type="GO" id="GO:0006303">
    <property type="term" value="P:double-strand break repair via nonhomologous end joining"/>
    <property type="evidence" value="ECO:0000314"/>
    <property type="project" value="SGD"/>
</dbReference>
<dbReference type="GO" id="GO:0007534">
    <property type="term" value="P:gene conversion at mating-type locus"/>
    <property type="evidence" value="ECO:0000315"/>
    <property type="project" value="SGD"/>
</dbReference>
<dbReference type="GO" id="GO:0035753">
    <property type="term" value="P:maintenance of DNA trinucleotide repeats"/>
    <property type="evidence" value="ECO:0000315"/>
    <property type="project" value="SGD"/>
</dbReference>
<dbReference type="CDD" id="cd09907">
    <property type="entry name" value="H3TH_FEN1-Euk"/>
    <property type="match status" value="1"/>
</dbReference>
<dbReference type="CDD" id="cd09867">
    <property type="entry name" value="PIN_FEN1"/>
    <property type="match status" value="1"/>
</dbReference>
<dbReference type="FunFam" id="1.10.150.20:FF:000009">
    <property type="entry name" value="Flap endonuclease 1"/>
    <property type="match status" value="1"/>
</dbReference>
<dbReference type="FunFam" id="3.40.50.1010:FF:000003">
    <property type="entry name" value="Flap endonuclease 1"/>
    <property type="match status" value="1"/>
</dbReference>
<dbReference type="Gene3D" id="1.10.150.20">
    <property type="entry name" value="5' to 3' exonuclease, C-terminal subdomain"/>
    <property type="match status" value="1"/>
</dbReference>
<dbReference type="Gene3D" id="3.40.50.1010">
    <property type="entry name" value="5'-nuclease"/>
    <property type="match status" value="1"/>
</dbReference>
<dbReference type="HAMAP" id="MF_00614">
    <property type="entry name" value="Fen"/>
    <property type="match status" value="1"/>
</dbReference>
<dbReference type="InterPro" id="IPR036279">
    <property type="entry name" value="5-3_exonuclease_C_sf"/>
</dbReference>
<dbReference type="InterPro" id="IPR023426">
    <property type="entry name" value="Flap_endonuc"/>
</dbReference>
<dbReference type="InterPro" id="IPR008918">
    <property type="entry name" value="HhH2"/>
</dbReference>
<dbReference type="InterPro" id="IPR029060">
    <property type="entry name" value="PIN-like_dom_sf"/>
</dbReference>
<dbReference type="InterPro" id="IPR006086">
    <property type="entry name" value="XPG-I_dom"/>
</dbReference>
<dbReference type="InterPro" id="IPR006084">
    <property type="entry name" value="XPG/Rad2"/>
</dbReference>
<dbReference type="InterPro" id="IPR019974">
    <property type="entry name" value="XPG_CS"/>
</dbReference>
<dbReference type="InterPro" id="IPR006085">
    <property type="entry name" value="XPG_DNA_repair_N"/>
</dbReference>
<dbReference type="PANTHER" id="PTHR11081:SF9">
    <property type="entry name" value="FLAP ENDONUCLEASE 1"/>
    <property type="match status" value="1"/>
</dbReference>
<dbReference type="PANTHER" id="PTHR11081">
    <property type="entry name" value="FLAP ENDONUCLEASE FAMILY MEMBER"/>
    <property type="match status" value="1"/>
</dbReference>
<dbReference type="Pfam" id="PF00867">
    <property type="entry name" value="XPG_I"/>
    <property type="match status" value="1"/>
</dbReference>
<dbReference type="Pfam" id="PF00752">
    <property type="entry name" value="XPG_N"/>
    <property type="match status" value="1"/>
</dbReference>
<dbReference type="PRINTS" id="PR00853">
    <property type="entry name" value="XPGRADSUPER"/>
</dbReference>
<dbReference type="SMART" id="SM00279">
    <property type="entry name" value="HhH2"/>
    <property type="match status" value="1"/>
</dbReference>
<dbReference type="SMART" id="SM00484">
    <property type="entry name" value="XPGI"/>
    <property type="match status" value="1"/>
</dbReference>
<dbReference type="SMART" id="SM00485">
    <property type="entry name" value="XPGN"/>
    <property type="match status" value="1"/>
</dbReference>
<dbReference type="SUPFAM" id="SSF47807">
    <property type="entry name" value="5' to 3' exonuclease, C-terminal subdomain"/>
    <property type="match status" value="1"/>
</dbReference>
<dbReference type="SUPFAM" id="SSF88723">
    <property type="entry name" value="PIN domain-like"/>
    <property type="match status" value="1"/>
</dbReference>
<dbReference type="PROSITE" id="PS00841">
    <property type="entry name" value="XPG_1"/>
    <property type="match status" value="1"/>
</dbReference>
<dbReference type="PROSITE" id="PS00842">
    <property type="entry name" value="XPG_2"/>
    <property type="match status" value="1"/>
</dbReference>
<reference key="1">
    <citation type="journal article" date="1992" name="Yeast">
        <title>Sequence of a 10.7 kb segment of yeast chromosome XI identifies the APN1 and the BAF1 loci and reveals one tRNA gene and several new open reading frames including homologs to RAD2 and kinases.</title>
        <authorList>
            <person name="Jacquier A."/>
            <person name="Legrain P."/>
            <person name="Dujon B."/>
        </authorList>
    </citation>
    <scope>NUCLEOTIDE SEQUENCE [GENOMIC DNA]</scope>
</reference>
<reference key="2">
    <citation type="journal article" date="1994" name="Nature">
        <title>Complete DNA sequence of yeast chromosome XI.</title>
        <authorList>
            <person name="Dujon B."/>
            <person name="Alexandraki D."/>
            <person name="Andre B."/>
            <person name="Ansorge W."/>
            <person name="Baladron V."/>
            <person name="Ballesta J.P.G."/>
            <person name="Banrevi A."/>
            <person name="Bolle P.-A."/>
            <person name="Bolotin-Fukuhara M."/>
            <person name="Bossier P."/>
            <person name="Bou G."/>
            <person name="Boyer J."/>
            <person name="Buitrago M.J."/>
            <person name="Cheret G."/>
            <person name="Colleaux L."/>
            <person name="Daignan-Fornier B."/>
            <person name="del Rey F."/>
            <person name="Dion C."/>
            <person name="Domdey H."/>
            <person name="Duesterhoeft A."/>
            <person name="Duesterhus S."/>
            <person name="Entian K.-D."/>
            <person name="Erfle H."/>
            <person name="Esteban P.F."/>
            <person name="Feldmann H."/>
            <person name="Fernandes L."/>
            <person name="Fobo G.M."/>
            <person name="Fritz C."/>
            <person name="Fukuhara H."/>
            <person name="Gabel C."/>
            <person name="Gaillon L."/>
            <person name="Garcia-Cantalejo J.M."/>
            <person name="Garcia-Ramirez J.J."/>
            <person name="Gent M.E."/>
            <person name="Ghazvini M."/>
            <person name="Goffeau A."/>
            <person name="Gonzalez A."/>
            <person name="Grothues D."/>
            <person name="Guerreiro P."/>
            <person name="Hegemann J.H."/>
            <person name="Hewitt N."/>
            <person name="Hilger F."/>
            <person name="Hollenberg C.P."/>
            <person name="Horaitis O."/>
            <person name="Indge K.J."/>
            <person name="Jacquier A."/>
            <person name="James C.M."/>
            <person name="Jauniaux J.-C."/>
            <person name="Jimenez A."/>
            <person name="Keuchel H."/>
            <person name="Kirchrath L."/>
            <person name="Kleine K."/>
            <person name="Koetter P."/>
            <person name="Legrain P."/>
            <person name="Liebl S."/>
            <person name="Louis E.J."/>
            <person name="Maia e Silva A."/>
            <person name="Marck C."/>
            <person name="Monnier A.-L."/>
            <person name="Moestl D."/>
            <person name="Mueller S."/>
            <person name="Obermaier B."/>
            <person name="Oliver S.G."/>
            <person name="Pallier C."/>
            <person name="Pascolo S."/>
            <person name="Pfeiffer F."/>
            <person name="Philippsen P."/>
            <person name="Planta R.J."/>
            <person name="Pohl F.M."/>
            <person name="Pohl T.M."/>
            <person name="Poehlmann R."/>
            <person name="Portetelle D."/>
            <person name="Purnelle B."/>
            <person name="Puzos V."/>
            <person name="Ramezani Rad M."/>
            <person name="Rasmussen S.W."/>
            <person name="Remacha M.A."/>
            <person name="Revuelta J.L."/>
            <person name="Richard G.-F."/>
            <person name="Rieger M."/>
            <person name="Rodrigues-Pousada C."/>
            <person name="Rose M."/>
            <person name="Rupp T."/>
            <person name="Santos M.A."/>
            <person name="Schwager C."/>
            <person name="Sensen C."/>
            <person name="Skala J."/>
            <person name="Soares H."/>
            <person name="Sor F."/>
            <person name="Stegemann J."/>
            <person name="Tettelin H."/>
            <person name="Thierry A."/>
            <person name="Tzermia M."/>
            <person name="Urrestarazu L.A."/>
            <person name="van Dyck L."/>
            <person name="van Vliet-Reedijk J.C."/>
            <person name="Valens M."/>
            <person name="Vandenbol M."/>
            <person name="Vilela C."/>
            <person name="Vissers S."/>
            <person name="von Wettstein D."/>
            <person name="Voss H."/>
            <person name="Wiemann S."/>
            <person name="Xu G."/>
            <person name="Zimmermann J."/>
            <person name="Haasemann M."/>
            <person name="Becker I."/>
            <person name="Mewes H.-W."/>
        </authorList>
    </citation>
    <scope>NUCLEOTIDE SEQUENCE [LARGE SCALE GENOMIC DNA]</scope>
    <source>
        <strain>ATCC 204508 / S288c</strain>
    </source>
</reference>
<reference key="3">
    <citation type="journal article" date="2014" name="G3 (Bethesda)">
        <title>The reference genome sequence of Saccharomyces cerevisiae: Then and now.</title>
        <authorList>
            <person name="Engel S.R."/>
            <person name="Dietrich F.S."/>
            <person name="Fisk D.G."/>
            <person name="Binkley G."/>
            <person name="Balakrishnan R."/>
            <person name="Costanzo M.C."/>
            <person name="Dwight S.S."/>
            <person name="Hitz B.C."/>
            <person name="Karra K."/>
            <person name="Nash R.S."/>
            <person name="Weng S."/>
            <person name="Wong E.D."/>
            <person name="Lloyd P."/>
            <person name="Skrzypek M.S."/>
            <person name="Miyasato S.R."/>
            <person name="Simison M."/>
            <person name="Cherry J.M."/>
        </authorList>
    </citation>
    <scope>GENOME REANNOTATION</scope>
    <source>
        <strain>ATCC 204508 / S288c</strain>
    </source>
</reference>
<reference key="4">
    <citation type="journal article" date="1997" name="Biochemistry">
        <title>Purification and characterization of the DNA polymerase alpha associated exonuclease: the RTH1 gene product.</title>
        <authorList>
            <person name="Zhu F.X."/>
            <person name="Biswas E.E."/>
            <person name="Biswas S.B."/>
        </authorList>
    </citation>
    <scope>PROTEIN SEQUENCE OF 284-298</scope>
    <scope>FUNCTION</scope>
    <scope>EXONUCLEASE AND RNASE H ACTIVITIES</scope>
</reference>
<reference key="5">
    <citation type="journal article" date="1994" name="Genes Dev.">
        <title>Functional domains within FEN-1 and RAD2 define a family of structure-specific endonucleases: implications for nucleotide excision repair.</title>
        <authorList>
            <person name="Harrington J.J."/>
            <person name="Lieber M.R."/>
        </authorList>
    </citation>
    <scope>CHARACTERIZATION</scope>
</reference>
<reference key="6">
    <citation type="journal article" date="1995" name="J. Bacteriol.">
        <title>Characterization of a mutant strain of Saccharomyces cerevisiae with a deletion of the RAD27 gene, a structural homolog of the RAD2 nucleotide excision repair gene.</title>
        <authorList>
            <person name="Reagan M.S."/>
            <person name="Pittenger C."/>
            <person name="Siede W."/>
            <person name="Friedberg E.C."/>
        </authorList>
    </citation>
    <scope>CHARACTERIZATION</scope>
</reference>
<reference key="7">
    <citation type="journal article" date="2000" name="EMBO J.">
        <title>Two modes of FEN1 binding to PCNA regulated by DNA.</title>
        <authorList>
            <person name="Gomes X.V."/>
            <person name="Burgers P.M."/>
        </authorList>
    </citation>
    <scope>INTERACTION WITH POL30</scope>
    <scope>MUTAGENESIS OF 346-PHE-PHE-347</scope>
</reference>
<reference key="8">
    <citation type="journal article" date="2002" name="J. Biol. Chem.">
        <title>Cleavage specificity of Saccharomyces cerevisiae flap endonuclease 1 suggests a double-flap structure as the cellular substrate.</title>
        <authorList>
            <person name="Kao H.I."/>
            <person name="Henricksen L.A."/>
            <person name="Liu Y."/>
            <person name="Bambara R.A."/>
        </authorList>
    </citation>
    <scope>FUNCTION</scope>
    <scope>ENDONUCLEASE ACTIVITY</scope>
    <scope>SUBSTRATE SPECIFICITY</scope>
    <scope>MUTAGENESIS OF GLY-240</scope>
</reference>
<reference key="9">
    <citation type="journal article" date="2003" name="J. Biol. Chem.">
        <title>Okazaki fragment maturation in yeast. I. Distribution of functions between FEN1 and DNA2.</title>
        <authorList>
            <person name="Ayyagari R."/>
            <person name="Gomes X.V."/>
            <person name="Gordenin D.A."/>
            <person name="Burgers P.M."/>
        </authorList>
    </citation>
    <scope>FUNCTION</scope>
</reference>
<reference key="10">
    <citation type="journal article" date="2003" name="Nature">
        <title>Global analysis of protein localization in budding yeast.</title>
        <authorList>
            <person name="Huh W.-K."/>
            <person name="Falvo J.V."/>
            <person name="Gerke L.C."/>
            <person name="Carroll A.S."/>
            <person name="Howson R.W."/>
            <person name="Weissman J.S."/>
            <person name="O'Shea E.K."/>
        </authorList>
    </citation>
    <scope>SUBCELLULAR LOCATION [LARGE SCALE ANALYSIS]</scope>
</reference>
<reference key="11">
    <citation type="journal article" date="2003" name="Nature">
        <title>Global analysis of protein expression in yeast.</title>
        <authorList>
            <person name="Ghaemmaghami S."/>
            <person name="Huh W.-K."/>
            <person name="Bower K."/>
            <person name="Howson R.W."/>
            <person name="Belle A."/>
            <person name="Dephoure N."/>
            <person name="O'Shea E.K."/>
            <person name="Weissman J.S."/>
        </authorList>
    </citation>
    <scope>LEVEL OF PROTEIN EXPRESSION [LARGE SCALE ANALYSIS]</scope>
</reference>
<reference key="12">
    <citation type="journal article" date="2006" name="J. Biol. Chem.">
        <title>Reconstituted Okazaki fragment processing indicates two pathways of primer removal.</title>
        <authorList>
            <person name="Rossi M.L."/>
            <person name="Bambara R.A."/>
        </authorList>
    </citation>
    <scope>FUNCTION</scope>
    <scope>MUTAGENESIS OF GLY-67</scope>
</reference>
<reference key="13">
    <citation type="journal article" date="2007" name="J. Biol. Chem.">
        <title>Concerted action of exonuclease and Gap-dependent endonuclease activities of FEN-1 contributes to the resolution of triplet repeat sequences (CTG)n- and (GAA)n-derived secondary structures formed during maturation of Okazaki fragments.</title>
        <authorList>
            <person name="Singh P."/>
            <person name="Zheng L."/>
            <person name="Chavez V."/>
            <person name="Qiu J."/>
            <person name="Shen B."/>
        </authorList>
    </citation>
    <scope>FUNCTION</scope>
    <scope>ENDONUCLEASE AND EXONUCLEASE ACTIVITIES</scope>
    <scope>MUTAGENESIS OF GLU-176</scope>
</reference>
<reference key="14">
    <citation type="journal article" date="2008" name="Mol. Cell. Biol.">
        <title>Nucleolar localization and dynamic roles of flap endonuclease 1 in ribosomal DNA replication and damage repair.</title>
        <authorList>
            <person name="Guo Z."/>
            <person name="Qian L."/>
            <person name="Liu R."/>
            <person name="Dai H."/>
            <person name="Zhou M."/>
            <person name="Zheng L."/>
            <person name="Shen B."/>
        </authorList>
    </citation>
    <scope>FUNCTION IN RDNA REPLICATION AND REPAIR</scope>
</reference>
<reference key="15">
    <citation type="journal article" date="2009" name="DNA Repair">
        <title>Evidence for a role of FEN1 in maintaining mitochondrial DNA integrity.</title>
        <authorList>
            <person name="Kalifa L."/>
            <person name="Beutner G."/>
            <person name="Phadnis N."/>
            <person name="Sheu S.S."/>
            <person name="Sia E.A."/>
        </authorList>
    </citation>
    <scope>FUNCTION IN MITOCHONDRIAL DNA REPAIR</scope>
    <scope>SUBCELLULAR LOCATION</scope>
</reference>
<reference key="16">
    <citation type="journal article" date="2009" name="Mol. Cell. Biol.">
        <title>The transition of closely opposed lesions to double-strand breaks during long-patch base excision repair is prevented by the coordinated action of DNA polymerase delta and Rad27/Fen1.</title>
        <authorList>
            <person name="Ma W."/>
            <person name="Panduri V."/>
            <person name="Sterling J.F."/>
            <person name="Van Houten B."/>
            <person name="Gordenin D.A."/>
            <person name="Resnick M.A."/>
        </authorList>
    </citation>
    <scope>FUNCTION IN DNA REPAIR</scope>
</reference>
<reference key="17">
    <citation type="journal article" date="2012" name="Proc. Natl. Acad. Sci. U.S.A.">
        <title>N-terminal acetylome analyses and functional insights of the N-terminal acetyltransferase NatB.</title>
        <authorList>
            <person name="Van Damme P."/>
            <person name="Lasa M."/>
            <person name="Polevoda B."/>
            <person name="Gazquez C."/>
            <person name="Elosegui-Artola A."/>
            <person name="Kim D.S."/>
            <person name="De Juan-Pardo E."/>
            <person name="Demeyer K."/>
            <person name="Hole K."/>
            <person name="Larrea E."/>
            <person name="Timmerman E."/>
            <person name="Prieto J."/>
            <person name="Arnesen T."/>
            <person name="Sherman F."/>
            <person name="Gevaert K."/>
            <person name="Aldabe R."/>
        </authorList>
    </citation>
    <scope>IDENTIFICATION BY MASS SPECTROMETRY [LARGE SCALE ANALYSIS]</scope>
</reference>